<accession>Q6D8D2</accession>
<organism>
    <name type="scientific">Pectobacterium atrosepticum (strain SCRI 1043 / ATCC BAA-672)</name>
    <name type="common">Erwinia carotovora subsp. atroseptica</name>
    <dbReference type="NCBI Taxonomy" id="218491"/>
    <lineage>
        <taxon>Bacteria</taxon>
        <taxon>Pseudomonadati</taxon>
        <taxon>Pseudomonadota</taxon>
        <taxon>Gammaproteobacteria</taxon>
        <taxon>Enterobacterales</taxon>
        <taxon>Pectobacteriaceae</taxon>
        <taxon>Pectobacterium</taxon>
    </lineage>
</organism>
<name>FABZ_PECAS</name>
<reference key="1">
    <citation type="journal article" date="2004" name="Proc. Natl. Acad. Sci. U.S.A.">
        <title>Genome sequence of the enterobacterial phytopathogen Erwinia carotovora subsp. atroseptica and characterization of virulence factors.</title>
        <authorList>
            <person name="Bell K.S."/>
            <person name="Sebaihia M."/>
            <person name="Pritchard L."/>
            <person name="Holden M.T.G."/>
            <person name="Hyman L.J."/>
            <person name="Holeva M.C."/>
            <person name="Thomson N.R."/>
            <person name="Bentley S.D."/>
            <person name="Churcher L.J.C."/>
            <person name="Mungall K."/>
            <person name="Atkin R."/>
            <person name="Bason N."/>
            <person name="Brooks K."/>
            <person name="Chillingworth T."/>
            <person name="Clark K."/>
            <person name="Doggett J."/>
            <person name="Fraser A."/>
            <person name="Hance Z."/>
            <person name="Hauser H."/>
            <person name="Jagels K."/>
            <person name="Moule S."/>
            <person name="Norbertczak H."/>
            <person name="Ormond D."/>
            <person name="Price C."/>
            <person name="Quail M.A."/>
            <person name="Sanders M."/>
            <person name="Walker D."/>
            <person name="Whitehead S."/>
            <person name="Salmond G.P.C."/>
            <person name="Birch P.R.J."/>
            <person name="Parkhill J."/>
            <person name="Toth I.K."/>
        </authorList>
    </citation>
    <scope>NUCLEOTIDE SEQUENCE [LARGE SCALE GENOMIC DNA]</scope>
    <source>
        <strain>SCRI 1043 / ATCC BAA-672</strain>
    </source>
</reference>
<feature type="chain" id="PRO_0000091678" description="3-hydroxyacyl-[acyl-carrier-protein] dehydratase FabZ">
    <location>
        <begin position="1"/>
        <end position="151"/>
    </location>
</feature>
<feature type="active site" evidence="1">
    <location>
        <position position="54"/>
    </location>
</feature>
<sequence length="151" mass="17105">MTTDTHTLNIEEILELLPHRFPFLLVDRVLDFEKGKFLRAVKNVSFNEPFFQGHFPGKPIFPGVLILEAMAQATGILAFKSVGKLEPGELYYFAAVDEARFKRPVQPGDQMILEVEFIKERRGVARFKGVAKVDGEVACEASMMCARRRES</sequence>
<evidence type="ECO:0000255" key="1">
    <source>
        <dbReference type="HAMAP-Rule" id="MF_00406"/>
    </source>
</evidence>
<comment type="function">
    <text evidence="1">Involved in unsaturated fatty acids biosynthesis. Catalyzes the dehydration of short chain beta-hydroxyacyl-ACPs and long chain saturated and unsaturated beta-hydroxyacyl-ACPs.</text>
</comment>
<comment type="catalytic activity">
    <reaction evidence="1">
        <text>a (3R)-hydroxyacyl-[ACP] = a (2E)-enoyl-[ACP] + H2O</text>
        <dbReference type="Rhea" id="RHEA:13097"/>
        <dbReference type="Rhea" id="RHEA-COMP:9925"/>
        <dbReference type="Rhea" id="RHEA-COMP:9945"/>
        <dbReference type="ChEBI" id="CHEBI:15377"/>
        <dbReference type="ChEBI" id="CHEBI:78784"/>
        <dbReference type="ChEBI" id="CHEBI:78827"/>
        <dbReference type="EC" id="4.2.1.59"/>
    </reaction>
</comment>
<comment type="subcellular location">
    <subcellularLocation>
        <location evidence="1">Cytoplasm</location>
    </subcellularLocation>
</comment>
<comment type="similarity">
    <text evidence="1">Belongs to the thioester dehydratase family. FabZ subfamily.</text>
</comment>
<keyword id="KW-0963">Cytoplasm</keyword>
<keyword id="KW-0441">Lipid A biosynthesis</keyword>
<keyword id="KW-0444">Lipid biosynthesis</keyword>
<keyword id="KW-0443">Lipid metabolism</keyword>
<keyword id="KW-0456">Lyase</keyword>
<keyword id="KW-1185">Reference proteome</keyword>
<protein>
    <recommendedName>
        <fullName evidence="1">3-hydroxyacyl-[acyl-carrier-protein] dehydratase FabZ</fullName>
        <ecNumber evidence="1">4.2.1.59</ecNumber>
    </recommendedName>
    <alternativeName>
        <fullName evidence="1">(3R)-hydroxymyristoyl-[acyl-carrier-protein] dehydratase</fullName>
        <shortName evidence="1">(3R)-hydroxymyristoyl-ACP dehydrase</shortName>
    </alternativeName>
    <alternativeName>
        <fullName evidence="1">Beta-hydroxyacyl-ACP dehydratase</fullName>
    </alternativeName>
</protein>
<proteinExistence type="inferred from homology"/>
<dbReference type="EC" id="4.2.1.59" evidence="1"/>
<dbReference type="EMBL" id="BX950851">
    <property type="protein sequence ID" value="CAG73953.1"/>
    <property type="molecule type" value="Genomic_DNA"/>
</dbReference>
<dbReference type="SMR" id="Q6D8D2"/>
<dbReference type="STRING" id="218491.ECA1042"/>
<dbReference type="KEGG" id="eca:ECA1042"/>
<dbReference type="PATRIC" id="fig|218491.5.peg.1050"/>
<dbReference type="eggNOG" id="COG0764">
    <property type="taxonomic scope" value="Bacteria"/>
</dbReference>
<dbReference type="HOGENOM" id="CLU_078912_1_0_6"/>
<dbReference type="OrthoDB" id="9772788at2"/>
<dbReference type="Proteomes" id="UP000007966">
    <property type="component" value="Chromosome"/>
</dbReference>
<dbReference type="GO" id="GO:0005737">
    <property type="term" value="C:cytoplasm"/>
    <property type="evidence" value="ECO:0007669"/>
    <property type="project" value="UniProtKB-SubCell"/>
</dbReference>
<dbReference type="GO" id="GO:0016020">
    <property type="term" value="C:membrane"/>
    <property type="evidence" value="ECO:0007669"/>
    <property type="project" value="GOC"/>
</dbReference>
<dbReference type="GO" id="GO:0019171">
    <property type="term" value="F:(3R)-hydroxyacyl-[acyl-carrier-protein] dehydratase activity"/>
    <property type="evidence" value="ECO:0007669"/>
    <property type="project" value="UniProtKB-EC"/>
</dbReference>
<dbReference type="GO" id="GO:0006633">
    <property type="term" value="P:fatty acid biosynthetic process"/>
    <property type="evidence" value="ECO:0007669"/>
    <property type="project" value="UniProtKB-UniRule"/>
</dbReference>
<dbReference type="GO" id="GO:0009245">
    <property type="term" value="P:lipid A biosynthetic process"/>
    <property type="evidence" value="ECO:0007669"/>
    <property type="project" value="UniProtKB-UniRule"/>
</dbReference>
<dbReference type="CDD" id="cd01288">
    <property type="entry name" value="FabZ"/>
    <property type="match status" value="1"/>
</dbReference>
<dbReference type="FunFam" id="3.10.129.10:FF:000001">
    <property type="entry name" value="3-hydroxyacyl-[acyl-carrier-protein] dehydratase FabZ"/>
    <property type="match status" value="1"/>
</dbReference>
<dbReference type="Gene3D" id="3.10.129.10">
    <property type="entry name" value="Hotdog Thioesterase"/>
    <property type="match status" value="1"/>
</dbReference>
<dbReference type="HAMAP" id="MF_00406">
    <property type="entry name" value="FabZ"/>
    <property type="match status" value="1"/>
</dbReference>
<dbReference type="InterPro" id="IPR013114">
    <property type="entry name" value="FabA_FabZ"/>
</dbReference>
<dbReference type="InterPro" id="IPR010084">
    <property type="entry name" value="FabZ"/>
</dbReference>
<dbReference type="InterPro" id="IPR029069">
    <property type="entry name" value="HotDog_dom_sf"/>
</dbReference>
<dbReference type="NCBIfam" id="TIGR01750">
    <property type="entry name" value="fabZ"/>
    <property type="match status" value="1"/>
</dbReference>
<dbReference type="NCBIfam" id="NF000582">
    <property type="entry name" value="PRK00006.1"/>
    <property type="match status" value="1"/>
</dbReference>
<dbReference type="PANTHER" id="PTHR30272">
    <property type="entry name" value="3-HYDROXYACYL-[ACYL-CARRIER-PROTEIN] DEHYDRATASE"/>
    <property type="match status" value="1"/>
</dbReference>
<dbReference type="PANTHER" id="PTHR30272:SF1">
    <property type="entry name" value="3-HYDROXYACYL-[ACYL-CARRIER-PROTEIN] DEHYDRATASE"/>
    <property type="match status" value="1"/>
</dbReference>
<dbReference type="Pfam" id="PF07977">
    <property type="entry name" value="FabA"/>
    <property type="match status" value="1"/>
</dbReference>
<dbReference type="SUPFAM" id="SSF54637">
    <property type="entry name" value="Thioesterase/thiol ester dehydrase-isomerase"/>
    <property type="match status" value="1"/>
</dbReference>
<gene>
    <name evidence="1" type="primary">fabZ</name>
    <name type="ordered locus">ECA1042</name>
</gene>